<evidence type="ECO:0000255" key="1">
    <source>
        <dbReference type="HAMAP-Rule" id="MF_01310"/>
    </source>
</evidence>
<evidence type="ECO:0000305" key="2"/>
<name>RS11_BURP1</name>
<reference key="1">
    <citation type="journal article" date="2010" name="Genome Biol. Evol.">
        <title>Continuing evolution of Burkholderia mallei through genome reduction and large-scale rearrangements.</title>
        <authorList>
            <person name="Losada L."/>
            <person name="Ronning C.M."/>
            <person name="DeShazer D."/>
            <person name="Woods D."/>
            <person name="Fedorova N."/>
            <person name="Kim H.S."/>
            <person name="Shabalina S.A."/>
            <person name="Pearson T.R."/>
            <person name="Brinkac L."/>
            <person name="Tan P."/>
            <person name="Nandi T."/>
            <person name="Crabtree J."/>
            <person name="Badger J."/>
            <person name="Beckstrom-Sternberg S."/>
            <person name="Saqib M."/>
            <person name="Schutzer S.E."/>
            <person name="Keim P."/>
            <person name="Nierman W.C."/>
        </authorList>
    </citation>
    <scope>NUCLEOTIDE SEQUENCE [LARGE SCALE GENOMIC DNA]</scope>
    <source>
        <strain>1710b</strain>
    </source>
</reference>
<dbReference type="EMBL" id="CP000124">
    <property type="protein sequence ID" value="ABA48428.1"/>
    <property type="molecule type" value="Genomic_DNA"/>
</dbReference>
<dbReference type="RefSeq" id="WP_004197937.1">
    <property type="nucleotide sequence ID" value="NC_007434.1"/>
</dbReference>
<dbReference type="SMR" id="Q3JMT7"/>
<dbReference type="EnsemblBacteria" id="ABA48428">
    <property type="protein sequence ID" value="ABA48428"/>
    <property type="gene ID" value="BURPS1710b_3752"/>
</dbReference>
<dbReference type="GeneID" id="98107136"/>
<dbReference type="KEGG" id="bpm:BURPS1710b_3752"/>
<dbReference type="HOGENOM" id="CLU_072439_5_0_4"/>
<dbReference type="Proteomes" id="UP000002700">
    <property type="component" value="Chromosome I"/>
</dbReference>
<dbReference type="GO" id="GO:1990904">
    <property type="term" value="C:ribonucleoprotein complex"/>
    <property type="evidence" value="ECO:0007669"/>
    <property type="project" value="UniProtKB-KW"/>
</dbReference>
<dbReference type="GO" id="GO:0005840">
    <property type="term" value="C:ribosome"/>
    <property type="evidence" value="ECO:0007669"/>
    <property type="project" value="UniProtKB-KW"/>
</dbReference>
<dbReference type="GO" id="GO:0019843">
    <property type="term" value="F:rRNA binding"/>
    <property type="evidence" value="ECO:0007669"/>
    <property type="project" value="UniProtKB-UniRule"/>
</dbReference>
<dbReference type="GO" id="GO:0003735">
    <property type="term" value="F:structural constituent of ribosome"/>
    <property type="evidence" value="ECO:0007669"/>
    <property type="project" value="InterPro"/>
</dbReference>
<dbReference type="GO" id="GO:0006412">
    <property type="term" value="P:translation"/>
    <property type="evidence" value="ECO:0007669"/>
    <property type="project" value="UniProtKB-UniRule"/>
</dbReference>
<dbReference type="FunFam" id="3.30.420.80:FF:000001">
    <property type="entry name" value="30S ribosomal protein S11"/>
    <property type="match status" value="1"/>
</dbReference>
<dbReference type="Gene3D" id="3.30.420.80">
    <property type="entry name" value="Ribosomal protein S11"/>
    <property type="match status" value="1"/>
</dbReference>
<dbReference type="HAMAP" id="MF_01310">
    <property type="entry name" value="Ribosomal_uS11"/>
    <property type="match status" value="1"/>
</dbReference>
<dbReference type="InterPro" id="IPR001971">
    <property type="entry name" value="Ribosomal_uS11"/>
</dbReference>
<dbReference type="InterPro" id="IPR019981">
    <property type="entry name" value="Ribosomal_uS11_bac-type"/>
</dbReference>
<dbReference type="InterPro" id="IPR018102">
    <property type="entry name" value="Ribosomal_uS11_CS"/>
</dbReference>
<dbReference type="InterPro" id="IPR036967">
    <property type="entry name" value="Ribosomal_uS11_sf"/>
</dbReference>
<dbReference type="NCBIfam" id="NF003698">
    <property type="entry name" value="PRK05309.1"/>
    <property type="match status" value="1"/>
</dbReference>
<dbReference type="NCBIfam" id="TIGR03632">
    <property type="entry name" value="uS11_bact"/>
    <property type="match status" value="1"/>
</dbReference>
<dbReference type="PANTHER" id="PTHR11759">
    <property type="entry name" value="40S RIBOSOMAL PROTEIN S14/30S RIBOSOMAL PROTEIN S11"/>
    <property type="match status" value="1"/>
</dbReference>
<dbReference type="Pfam" id="PF00411">
    <property type="entry name" value="Ribosomal_S11"/>
    <property type="match status" value="1"/>
</dbReference>
<dbReference type="PIRSF" id="PIRSF002131">
    <property type="entry name" value="Ribosomal_S11"/>
    <property type="match status" value="1"/>
</dbReference>
<dbReference type="SUPFAM" id="SSF53137">
    <property type="entry name" value="Translational machinery components"/>
    <property type="match status" value="1"/>
</dbReference>
<dbReference type="PROSITE" id="PS00054">
    <property type="entry name" value="RIBOSOMAL_S11"/>
    <property type="match status" value="1"/>
</dbReference>
<protein>
    <recommendedName>
        <fullName evidence="1">Small ribosomal subunit protein uS11</fullName>
    </recommendedName>
    <alternativeName>
        <fullName evidence="2">30S ribosomal protein S11</fullName>
    </alternativeName>
</protein>
<sequence length="133" mass="14118">MAKASNTAAQRVRKKVKKNVAEGVVHVHASFNNTIITITDRQGNALAWATSGGQGFKGSRKSTPFAAQVAAESAGRVAMEYGVKNLEVRIKGPGPGRESAVRALHGLGIKITAISDVTPIPHNGCRPPKRRRI</sequence>
<gene>
    <name evidence="1" type="primary">rpsK</name>
    <name type="ordered locus">BURPS1710b_3752</name>
</gene>
<organism>
    <name type="scientific">Burkholderia pseudomallei (strain 1710b)</name>
    <dbReference type="NCBI Taxonomy" id="320372"/>
    <lineage>
        <taxon>Bacteria</taxon>
        <taxon>Pseudomonadati</taxon>
        <taxon>Pseudomonadota</taxon>
        <taxon>Betaproteobacteria</taxon>
        <taxon>Burkholderiales</taxon>
        <taxon>Burkholderiaceae</taxon>
        <taxon>Burkholderia</taxon>
        <taxon>pseudomallei group</taxon>
    </lineage>
</organism>
<accession>Q3JMT7</accession>
<feature type="chain" id="PRO_0000230390" description="Small ribosomal subunit protein uS11">
    <location>
        <begin position="1"/>
        <end position="133"/>
    </location>
</feature>
<keyword id="KW-0687">Ribonucleoprotein</keyword>
<keyword id="KW-0689">Ribosomal protein</keyword>
<keyword id="KW-0694">RNA-binding</keyword>
<keyword id="KW-0699">rRNA-binding</keyword>
<proteinExistence type="inferred from homology"/>
<comment type="function">
    <text evidence="1">Located on the platform of the 30S subunit, it bridges several disparate RNA helices of the 16S rRNA. Forms part of the Shine-Dalgarno cleft in the 70S ribosome.</text>
</comment>
<comment type="subunit">
    <text evidence="1">Part of the 30S ribosomal subunit. Interacts with proteins S7 and S18. Binds to IF-3.</text>
</comment>
<comment type="similarity">
    <text evidence="1">Belongs to the universal ribosomal protein uS11 family.</text>
</comment>